<proteinExistence type="inferred from homology"/>
<organism>
    <name type="scientific">Ajellomyces capsulatus (strain NAm1 / WU24)</name>
    <name type="common">Darling's disease fungus</name>
    <name type="synonym">Histoplasma capsulatum</name>
    <dbReference type="NCBI Taxonomy" id="2059318"/>
    <lineage>
        <taxon>Eukaryota</taxon>
        <taxon>Fungi</taxon>
        <taxon>Dikarya</taxon>
        <taxon>Ascomycota</taxon>
        <taxon>Pezizomycotina</taxon>
        <taxon>Eurotiomycetes</taxon>
        <taxon>Eurotiomycetidae</taxon>
        <taxon>Onygenales</taxon>
        <taxon>Ajellomycetaceae</taxon>
        <taxon>Histoplasma</taxon>
    </lineage>
</organism>
<accession>A6R3Q6</accession>
<feature type="chain" id="PRO_0000320407" description="Ribosome biogenesis protein NSA2">
    <location>
        <begin position="1"/>
        <end position="261"/>
    </location>
</feature>
<feature type="region of interest" description="Disordered" evidence="4">
    <location>
        <begin position="28"/>
        <end position="90"/>
    </location>
</feature>
<feature type="short sequence motif" description="Nuclear localization signal" evidence="3">
    <location>
        <begin position="51"/>
        <end position="58"/>
    </location>
</feature>
<feature type="compositionally biased region" description="Basic and acidic residues" evidence="4">
    <location>
        <begin position="28"/>
        <end position="37"/>
    </location>
</feature>
<feature type="compositionally biased region" description="Basic residues" evidence="4">
    <location>
        <begin position="45"/>
        <end position="56"/>
    </location>
</feature>
<feature type="compositionally biased region" description="Basic and acidic residues" evidence="4">
    <location>
        <begin position="57"/>
        <end position="73"/>
    </location>
</feature>
<feature type="compositionally biased region" description="Polar residues" evidence="4">
    <location>
        <begin position="74"/>
        <end position="86"/>
    </location>
</feature>
<comment type="function">
    <text evidence="1">Involved in the biogenesis of the 60S ribosomal subunit. May play a part in the quality control of pre-60S particles (By similarity).</text>
</comment>
<comment type="subunit">
    <text evidence="2">Component of the pre-66S ribosomal particle. Interacts with NOP7 and RRP1. Interacts with RSA4 (via WD repeats).</text>
</comment>
<comment type="subcellular location">
    <subcellularLocation>
        <location evidence="1">Nucleus</location>
        <location evidence="1">Nucleolus</location>
    </subcellularLocation>
</comment>
<comment type="similarity">
    <text evidence="5">Belongs to the eukaryotic ribosomal protein eS8 family. Ribosome biogenesis protein NSA2 subfamily.</text>
</comment>
<keyword id="KW-0539">Nucleus</keyword>
<keyword id="KW-1185">Reference proteome</keyword>
<keyword id="KW-0687">Ribonucleoprotein</keyword>
<keyword id="KW-0690">Ribosome biogenesis</keyword>
<keyword id="KW-0698">rRNA processing</keyword>
<protein>
    <recommendedName>
        <fullName>Ribosome biogenesis protein NSA2</fullName>
    </recommendedName>
</protein>
<dbReference type="EMBL" id="CH476658">
    <property type="protein sequence ID" value="EDN07754.1"/>
    <property type="molecule type" value="Genomic_DNA"/>
</dbReference>
<dbReference type="SMR" id="A6R3Q6"/>
<dbReference type="STRING" id="339724.A6R3Q6"/>
<dbReference type="KEGG" id="aje:HCAG_04264"/>
<dbReference type="VEuPathDB" id="FungiDB:HCAG_04264"/>
<dbReference type="HOGENOM" id="CLU_1070048_0_0_1"/>
<dbReference type="OMA" id="TNTPEND"/>
<dbReference type="OrthoDB" id="4963at299071"/>
<dbReference type="Proteomes" id="UP000009297">
    <property type="component" value="Unassembled WGS sequence"/>
</dbReference>
<dbReference type="GO" id="GO:0005730">
    <property type="term" value="C:nucleolus"/>
    <property type="evidence" value="ECO:0007669"/>
    <property type="project" value="UniProtKB-SubCell"/>
</dbReference>
<dbReference type="GO" id="GO:1990904">
    <property type="term" value="C:ribonucleoprotein complex"/>
    <property type="evidence" value="ECO:0007669"/>
    <property type="project" value="UniProtKB-KW"/>
</dbReference>
<dbReference type="GO" id="GO:0006364">
    <property type="term" value="P:rRNA processing"/>
    <property type="evidence" value="ECO:0007669"/>
    <property type="project" value="UniProtKB-KW"/>
</dbReference>
<dbReference type="CDD" id="cd11381">
    <property type="entry name" value="NSA2"/>
    <property type="match status" value="1"/>
</dbReference>
<dbReference type="FunFam" id="2.40.10.310:FF:000001">
    <property type="entry name" value="NSA2, ribosome biogenesis homolog"/>
    <property type="match status" value="1"/>
</dbReference>
<dbReference type="Gene3D" id="2.40.10.310">
    <property type="match status" value="1"/>
</dbReference>
<dbReference type="InterPro" id="IPR039411">
    <property type="entry name" value="NSA2_fam"/>
</dbReference>
<dbReference type="InterPro" id="IPR022309">
    <property type="entry name" value="Ribosomal_Se8/biogenesis_NSA2"/>
</dbReference>
<dbReference type="PANTHER" id="PTHR12642">
    <property type="entry name" value="RIBOSOME BIOGENESIS PROTEIN NSA2 HOMOLOG"/>
    <property type="match status" value="1"/>
</dbReference>
<dbReference type="Pfam" id="PF01201">
    <property type="entry name" value="Ribosomal_S8e"/>
    <property type="match status" value="1"/>
</dbReference>
<reference key="1">
    <citation type="journal article" date="2009" name="Genome Res.">
        <title>Comparative genomic analyses of the human fungal pathogens Coccidioides and their relatives.</title>
        <authorList>
            <person name="Sharpton T.J."/>
            <person name="Stajich J.E."/>
            <person name="Rounsley S.D."/>
            <person name="Gardner M.J."/>
            <person name="Wortman J.R."/>
            <person name="Jordar V.S."/>
            <person name="Maiti R."/>
            <person name="Kodira C.D."/>
            <person name="Neafsey D.E."/>
            <person name="Zeng Q."/>
            <person name="Hung C.-Y."/>
            <person name="McMahan C."/>
            <person name="Muszewska A."/>
            <person name="Grynberg M."/>
            <person name="Mandel M.A."/>
            <person name="Kellner E.M."/>
            <person name="Barker B.M."/>
            <person name="Galgiani J.N."/>
            <person name="Orbach M.J."/>
            <person name="Kirkland T.N."/>
            <person name="Cole G.T."/>
            <person name="Henn M.R."/>
            <person name="Birren B.W."/>
            <person name="Taylor J.W."/>
        </authorList>
    </citation>
    <scope>NUCLEOTIDE SEQUENCE [LARGE SCALE GENOMIC DNA]</scope>
    <source>
        <strain>NAm1 / WU24</strain>
    </source>
</reference>
<name>NSA2_AJECN</name>
<gene>
    <name type="primary">NSA2</name>
    <name type="ORF">HCAG_04264</name>
</gene>
<evidence type="ECO:0000250" key="1"/>
<evidence type="ECO:0000250" key="2">
    <source>
        <dbReference type="UniProtKB" id="P40078"/>
    </source>
</evidence>
<evidence type="ECO:0000255" key="3">
    <source>
        <dbReference type="PROSITE-ProRule" id="PRU00768"/>
    </source>
</evidence>
<evidence type="ECO:0000256" key="4">
    <source>
        <dbReference type="SAM" id="MobiDB-lite"/>
    </source>
</evidence>
<evidence type="ECO:0000305" key="5"/>
<sequence>MPQNEYIERWQKQYGERLDHEERTRKRIAREAHKQSHDAQSFRGLRAKLYQKKRHAEKIEMKKRIRAQEEKNVKSSAPNEPSSTPLPNYLLDRSQETNAKSLSSAIKNKRAEKAAQFSVPLPKVKGISEEEMFKVVKTGKKTAKKSWKRMITKPTFVGADFTRRPVKYERFIRPMGLRYKKANVTHPKLGVTVQLPIISVKKNPQSPMYTQLGVLTKGTIIEVNVSELGQVTASGKVLWGKFAQITNNCENDGCVNAVLLV</sequence>